<comment type="function">
    <text evidence="1">Phosphorylates the antibiotic amicoumacin A (Ami), leading to its inactivation. Mediates natural B.subtilis resistance to the drug.</text>
</comment>
<comment type="catalytic activity">
    <reaction evidence="1">
        <text>amicoumacin A + ATP = amicoumacin A 2-phosphate + ADP + H(+)</text>
        <dbReference type="Rhea" id="RHEA:61588"/>
        <dbReference type="ChEBI" id="CHEBI:15378"/>
        <dbReference type="ChEBI" id="CHEBI:30616"/>
        <dbReference type="ChEBI" id="CHEBI:144858"/>
        <dbReference type="ChEBI" id="CHEBI:144859"/>
        <dbReference type="ChEBI" id="CHEBI:456216"/>
        <dbReference type="EC" id="2.7.1.230"/>
    </reaction>
    <physiologicalReaction direction="left-to-right" evidence="1">
        <dbReference type="Rhea" id="RHEA:61589"/>
    </physiologicalReaction>
</comment>
<comment type="disruption phenotype">
    <text evidence="1">Knockout mutant is susceptible to amicoumacin A.</text>
</comment>
<comment type="similarity">
    <text evidence="3">Belongs to the pseudomonas-type ThrB family.</text>
</comment>
<dbReference type="EC" id="2.7.1.230" evidence="1"/>
<dbReference type="EMBL" id="Y15254">
    <property type="protein sequence ID" value="CAA75554.1"/>
    <property type="molecule type" value="Genomic_DNA"/>
</dbReference>
<dbReference type="EMBL" id="AL009126">
    <property type="protein sequence ID" value="CAB12484.1"/>
    <property type="molecule type" value="Genomic_DNA"/>
</dbReference>
<dbReference type="PIR" id="H69794">
    <property type="entry name" value="H69794"/>
</dbReference>
<dbReference type="RefSeq" id="NP_388546.1">
    <property type="nucleotide sequence ID" value="NC_000964.3"/>
</dbReference>
<dbReference type="RefSeq" id="WP_010886430.1">
    <property type="nucleotide sequence ID" value="NZ_OZ025638.1"/>
</dbReference>
<dbReference type="SMR" id="O34640"/>
<dbReference type="FunCoup" id="O34640">
    <property type="interactions" value="21"/>
</dbReference>
<dbReference type="STRING" id="224308.BSU06640"/>
<dbReference type="PaxDb" id="224308-BSU06640"/>
<dbReference type="EnsemblBacteria" id="CAB12484">
    <property type="protein sequence ID" value="CAB12484"/>
    <property type="gene ID" value="BSU_06640"/>
</dbReference>
<dbReference type="GeneID" id="936055"/>
<dbReference type="KEGG" id="bsu:BSU06640"/>
<dbReference type="PATRIC" id="fig|224308.43.peg.701"/>
<dbReference type="eggNOG" id="COG2334">
    <property type="taxonomic scope" value="Bacteria"/>
</dbReference>
<dbReference type="InParanoid" id="O34640"/>
<dbReference type="OrthoDB" id="4030632at2"/>
<dbReference type="PhylomeDB" id="O34640"/>
<dbReference type="BioCyc" id="BSUB:BSU06640-MONOMER"/>
<dbReference type="BioCyc" id="MetaCyc:BSU06640-MONOMER"/>
<dbReference type="BRENDA" id="2.7.1.230">
    <property type="organism ID" value="658"/>
</dbReference>
<dbReference type="Proteomes" id="UP000001570">
    <property type="component" value="Chromosome"/>
</dbReference>
<dbReference type="GO" id="GO:0004413">
    <property type="term" value="F:homoserine kinase activity"/>
    <property type="evidence" value="ECO:0000318"/>
    <property type="project" value="GO_Central"/>
</dbReference>
<dbReference type="GO" id="GO:0046677">
    <property type="term" value="P:response to antibiotic"/>
    <property type="evidence" value="ECO:0007669"/>
    <property type="project" value="UniProtKB-KW"/>
</dbReference>
<dbReference type="GO" id="GO:0009088">
    <property type="term" value="P:threonine biosynthetic process"/>
    <property type="evidence" value="ECO:0000318"/>
    <property type="project" value="GO_Central"/>
</dbReference>
<dbReference type="FunFam" id="3.90.1200.10:FF:000044">
    <property type="entry name" value="Serine/threonine protein kinase"/>
    <property type="match status" value="1"/>
</dbReference>
<dbReference type="Gene3D" id="1.20.1270.170">
    <property type="match status" value="1"/>
</dbReference>
<dbReference type="Gene3D" id="3.30.200.70">
    <property type="match status" value="1"/>
</dbReference>
<dbReference type="Gene3D" id="1.10.510.10">
    <property type="entry name" value="Transferase(Phosphotransferase) domain 1"/>
    <property type="match status" value="1"/>
</dbReference>
<dbReference type="InterPro" id="IPR002575">
    <property type="entry name" value="Aminoglycoside_PTrfase"/>
</dbReference>
<dbReference type="InterPro" id="IPR011009">
    <property type="entry name" value="Kinase-like_dom_sf"/>
</dbReference>
<dbReference type="InterPro" id="IPR050249">
    <property type="entry name" value="Pseudomonas-type_ThrB"/>
</dbReference>
<dbReference type="PANTHER" id="PTHR21064:SF6">
    <property type="entry name" value="AMINOGLYCOSIDE PHOSPHOTRANSFERASE DOMAIN-CONTAINING PROTEIN"/>
    <property type="match status" value="1"/>
</dbReference>
<dbReference type="PANTHER" id="PTHR21064">
    <property type="entry name" value="AMINOGLYCOSIDE PHOSPHOTRANSFERASE DOMAIN-CONTAINING PROTEIN-RELATED"/>
    <property type="match status" value="1"/>
</dbReference>
<dbReference type="Pfam" id="PF01636">
    <property type="entry name" value="APH"/>
    <property type="match status" value="1"/>
</dbReference>
<dbReference type="SUPFAM" id="SSF56112">
    <property type="entry name" value="Protein kinase-like (PK-like)"/>
    <property type="match status" value="1"/>
</dbReference>
<reference key="1">
    <citation type="journal article" date="1998" name="Mol. Microbiol.">
        <title>PcrA is an essential DNA helicase of Bacillus subtilis fulfilling functions both in repair and rolling-circle replication.</title>
        <authorList>
            <person name="Petit M.-A."/>
            <person name="Dervyn E."/>
            <person name="Rose M."/>
            <person name="Entian K.-D."/>
            <person name="McGovern S."/>
            <person name="Ehrlich S.D."/>
            <person name="Bruand C."/>
        </authorList>
    </citation>
    <scope>NUCLEOTIDE SEQUENCE [GENOMIC DNA]</scope>
    <source>
        <strain>168</strain>
    </source>
</reference>
<reference key="2">
    <citation type="journal article" date="1997" name="Nature">
        <title>The complete genome sequence of the Gram-positive bacterium Bacillus subtilis.</title>
        <authorList>
            <person name="Kunst F."/>
            <person name="Ogasawara N."/>
            <person name="Moszer I."/>
            <person name="Albertini A.M."/>
            <person name="Alloni G."/>
            <person name="Azevedo V."/>
            <person name="Bertero M.G."/>
            <person name="Bessieres P."/>
            <person name="Bolotin A."/>
            <person name="Borchert S."/>
            <person name="Borriss R."/>
            <person name="Boursier L."/>
            <person name="Brans A."/>
            <person name="Braun M."/>
            <person name="Brignell S.C."/>
            <person name="Bron S."/>
            <person name="Brouillet S."/>
            <person name="Bruschi C.V."/>
            <person name="Caldwell B."/>
            <person name="Capuano V."/>
            <person name="Carter N.M."/>
            <person name="Choi S.-K."/>
            <person name="Codani J.-J."/>
            <person name="Connerton I.F."/>
            <person name="Cummings N.J."/>
            <person name="Daniel R.A."/>
            <person name="Denizot F."/>
            <person name="Devine K.M."/>
            <person name="Duesterhoeft A."/>
            <person name="Ehrlich S.D."/>
            <person name="Emmerson P.T."/>
            <person name="Entian K.-D."/>
            <person name="Errington J."/>
            <person name="Fabret C."/>
            <person name="Ferrari E."/>
            <person name="Foulger D."/>
            <person name="Fritz C."/>
            <person name="Fujita M."/>
            <person name="Fujita Y."/>
            <person name="Fuma S."/>
            <person name="Galizzi A."/>
            <person name="Galleron N."/>
            <person name="Ghim S.-Y."/>
            <person name="Glaser P."/>
            <person name="Goffeau A."/>
            <person name="Golightly E.J."/>
            <person name="Grandi G."/>
            <person name="Guiseppi G."/>
            <person name="Guy B.J."/>
            <person name="Haga K."/>
            <person name="Haiech J."/>
            <person name="Harwood C.R."/>
            <person name="Henaut A."/>
            <person name="Hilbert H."/>
            <person name="Holsappel S."/>
            <person name="Hosono S."/>
            <person name="Hullo M.-F."/>
            <person name="Itaya M."/>
            <person name="Jones L.-M."/>
            <person name="Joris B."/>
            <person name="Karamata D."/>
            <person name="Kasahara Y."/>
            <person name="Klaerr-Blanchard M."/>
            <person name="Klein C."/>
            <person name="Kobayashi Y."/>
            <person name="Koetter P."/>
            <person name="Koningstein G."/>
            <person name="Krogh S."/>
            <person name="Kumano M."/>
            <person name="Kurita K."/>
            <person name="Lapidus A."/>
            <person name="Lardinois S."/>
            <person name="Lauber J."/>
            <person name="Lazarevic V."/>
            <person name="Lee S.-M."/>
            <person name="Levine A."/>
            <person name="Liu H."/>
            <person name="Masuda S."/>
            <person name="Mauel C."/>
            <person name="Medigue C."/>
            <person name="Medina N."/>
            <person name="Mellado R.P."/>
            <person name="Mizuno M."/>
            <person name="Moestl D."/>
            <person name="Nakai S."/>
            <person name="Noback M."/>
            <person name="Noone D."/>
            <person name="O'Reilly M."/>
            <person name="Ogawa K."/>
            <person name="Ogiwara A."/>
            <person name="Oudega B."/>
            <person name="Park S.-H."/>
            <person name="Parro V."/>
            <person name="Pohl T.M."/>
            <person name="Portetelle D."/>
            <person name="Porwollik S."/>
            <person name="Prescott A.M."/>
            <person name="Presecan E."/>
            <person name="Pujic P."/>
            <person name="Purnelle B."/>
            <person name="Rapoport G."/>
            <person name="Rey M."/>
            <person name="Reynolds S."/>
            <person name="Rieger M."/>
            <person name="Rivolta C."/>
            <person name="Rocha E."/>
            <person name="Roche B."/>
            <person name="Rose M."/>
            <person name="Sadaie Y."/>
            <person name="Sato T."/>
            <person name="Scanlan E."/>
            <person name="Schleich S."/>
            <person name="Schroeter R."/>
            <person name="Scoffone F."/>
            <person name="Sekiguchi J."/>
            <person name="Sekowska A."/>
            <person name="Seror S.J."/>
            <person name="Serror P."/>
            <person name="Shin B.-S."/>
            <person name="Soldo B."/>
            <person name="Sorokin A."/>
            <person name="Tacconi E."/>
            <person name="Takagi T."/>
            <person name="Takahashi H."/>
            <person name="Takemaru K."/>
            <person name="Takeuchi M."/>
            <person name="Tamakoshi A."/>
            <person name="Tanaka T."/>
            <person name="Terpstra P."/>
            <person name="Tognoni A."/>
            <person name="Tosato V."/>
            <person name="Uchiyama S."/>
            <person name="Vandenbol M."/>
            <person name="Vannier F."/>
            <person name="Vassarotti A."/>
            <person name="Viari A."/>
            <person name="Wambutt R."/>
            <person name="Wedler E."/>
            <person name="Wedler H."/>
            <person name="Weitzenegger T."/>
            <person name="Winters P."/>
            <person name="Wipat A."/>
            <person name="Yamamoto H."/>
            <person name="Yamane K."/>
            <person name="Yasumoto K."/>
            <person name="Yata K."/>
            <person name="Yoshida K."/>
            <person name="Yoshikawa H.-F."/>
            <person name="Zumstein E."/>
            <person name="Yoshikawa H."/>
            <person name="Danchin A."/>
        </authorList>
    </citation>
    <scope>NUCLEOTIDE SEQUENCE [LARGE SCALE GENOMIC DNA]</scope>
    <source>
        <strain>168</strain>
    </source>
</reference>
<reference key="3">
    <citation type="journal article" date="2018" name="Proc. Natl. Acad. Sci. U.S.A.">
        <title>Ultrahigh-throughput functional profiling of microbiota communities.</title>
        <authorList>
            <person name="Terekhov S.S."/>
            <person name="Smirnov I.V."/>
            <person name="Malakhova M.V."/>
            <person name="Samoilov A.E."/>
            <person name="Manolov A.I."/>
            <person name="Nazarov A.S."/>
            <person name="Danilov D.V."/>
            <person name="Dubiley S.A."/>
            <person name="Osterman I.A."/>
            <person name="Rubtsova M.P."/>
            <person name="Kostryukova E.S."/>
            <person name="Ziganshin R.H."/>
            <person name="Kornienko M.A."/>
            <person name="Vanyushkina A.A."/>
            <person name="Bukato O.N."/>
            <person name="Ilina E.N."/>
            <person name="Vlasov V.V."/>
            <person name="Severinov K.V."/>
            <person name="Gabibov A.G."/>
            <person name="Altman S."/>
        </authorList>
    </citation>
    <scope>FUNCTION</scope>
    <scope>CATALYTIC ACTIVITY</scope>
    <scope>DISRUPTION PHENOTYPE</scope>
</reference>
<accession>O34640</accession>
<feature type="chain" id="PRO_0000172201" description="Amicoumacin kinase">
    <location>
        <begin position="1"/>
        <end position="336"/>
    </location>
</feature>
<evidence type="ECO:0000269" key="1">
    <source>
    </source>
</evidence>
<evidence type="ECO:0000303" key="2">
    <source>
    </source>
</evidence>
<evidence type="ECO:0000305" key="3"/>
<protein>
    <recommendedName>
        <fullName evidence="3">Amicoumacin kinase</fullName>
        <ecNumber evidence="1">2.7.1.230</ecNumber>
    </recommendedName>
    <alternativeName>
        <fullName evidence="2">Kinase AmiN</fullName>
    </alternativeName>
</protein>
<name>AMIN_BACSU</name>
<gene>
    <name evidence="2" type="primary">amiN</name>
    <name type="synonym">yerI</name>
    <name type="ordered locus">BSU06640</name>
</gene>
<sequence>MLDVHKDIKKIFHEEQVLAEAAARYGFSKDQVRFLADAENYVYECMKDNQPYILKITHTIRRSSDYMMGEMEWLRHLAIGGISVAKPLPSLNGKDVEAVPDGNGGSFLLRVYEKAPGQKVDESDWNETLFYELGRYTGSMHSLTKSYKLSNPAFKRQEWDEEEQLKLRKYVPEDQIKVFQQADSLMNELRRLPKSQDNYGLVHADLHHGNFNWDHGKITAFDFDDIGYNWFVNDISILLYNVLWYPVVPYDDKAAFTEEFMTHFMKGYWEENELDPAWLMIIPDFLRLRHMLIYGLLHQMFDLNTIGEEEKEMLAGFRRDIENGTPITAFDFSALV</sequence>
<organism>
    <name type="scientific">Bacillus subtilis (strain 168)</name>
    <dbReference type="NCBI Taxonomy" id="224308"/>
    <lineage>
        <taxon>Bacteria</taxon>
        <taxon>Bacillati</taxon>
        <taxon>Bacillota</taxon>
        <taxon>Bacilli</taxon>
        <taxon>Bacillales</taxon>
        <taxon>Bacillaceae</taxon>
        <taxon>Bacillus</taxon>
    </lineage>
</organism>
<proteinExistence type="evidence at protein level"/>
<keyword id="KW-0046">Antibiotic resistance</keyword>
<keyword id="KW-0418">Kinase</keyword>
<keyword id="KW-1185">Reference proteome</keyword>
<keyword id="KW-0808">Transferase</keyword>